<sequence>ATLKDITRRLKSIKNIQKITKSMKMVAAAKYARAERELKPARVYGTGSLALYEKAEIKGPEDKKKHLIIGVSSDRGLCGAIHSSVAKQMKNDMAALTAAGKEVMIVGIGEKIKSILYRTHSDQFLVSFKDVGRKPPTFGDASVIALELLNSGYEFDEGSIIFNQFKSVISYKTEEKPIFSFSTVVAAENMSIYDDIDADVLQNYQEYNLANIIYYSLKESTTSEQSARMTAMDNASKNASDMIDKLTLTFNRTRQAVITKELIEIISGAAALD</sequence>
<gene>
    <name evidence="3" type="primary">Atp5f1c</name>
    <name type="synonym">Atp5c</name>
    <name type="synonym">Atp5c1</name>
</gene>
<reference key="1">
    <citation type="submission" date="1993-06" db="EMBL/GenBank/DDBJ databases">
        <title>Molecular cloning, expression and characterization of the rat liver mitochondrial ATP synthase gamma subunit.</title>
        <authorList>
            <person name="Choi S.H."/>
            <person name="Thomas P.J."/>
            <person name="Lee J.E."/>
            <person name="Pedersen P.L."/>
        </authorList>
    </citation>
    <scope>NUCLEOTIDE SEQUENCE [MRNA] OF 4-273</scope>
    <source>
        <strain>Sprague-Dawley</strain>
        <tissue>Liver</tissue>
    </source>
</reference>
<reference key="2">
    <citation type="submission" date="1991-02" db="PIR data bank">
        <authorList>
            <person name="Godinot C."/>
        </authorList>
    </citation>
    <scope>PROTEIN SEQUENCE OF 1-20</scope>
</reference>
<reference key="3">
    <citation type="submission" date="2007-07" db="UniProtKB">
        <authorList>
            <person name="Lubec G."/>
            <person name="Kang S.U."/>
        </authorList>
    </citation>
    <scope>PROTEIN SEQUENCE OF 91-101</scope>
    <scope>IDENTIFICATION BY MASS SPECTROMETRY</scope>
    <source>
        <strain>Sprague-Dawley</strain>
        <tissue>Brain</tissue>
    </source>
</reference>
<reference key="4">
    <citation type="journal article" date="2007" name="Mol. Cell. Proteomics">
        <title>Identification of two proteins associated with mammalian ATP synthase.</title>
        <authorList>
            <person name="Meyer B."/>
            <person name="Wittig I."/>
            <person name="Trifilieff E."/>
            <person name="Karas M."/>
            <person name="Schaegger H."/>
        </authorList>
    </citation>
    <scope>IDENTIFICATION BY MASS SPECTROMETRY</scope>
    <scope>IDENTIFICATION IN THE ATP SYNTHASE COMPLEX</scope>
</reference>
<reference key="5">
    <citation type="journal article" date="1998" name="Proc. Natl. Acad. Sci. U.S.A.">
        <title>The 2.8-A structure of rat liver F1-ATPase: configuration of a critical intermediate in ATP synthesis/hydrolysis.</title>
        <authorList>
            <person name="Bianchet M.A."/>
            <person name="Hullihen J."/>
            <person name="Pedersen P.L."/>
            <person name="Amzel L.M."/>
        </authorList>
    </citation>
    <scope>X-RAY CRYSTALLOGRAPHY (2.8 ANGSTROMS)</scope>
    <scope>SUBCELLULAR LOCATION</scope>
    <scope>SUBUNIT</scope>
</reference>
<comment type="function">
    <text evidence="2 3">Subunit gamma, of the mitochondrial membrane ATP synthase complex (F(1)F(0) ATP synthase or Complex V) that produces ATP from ADP in the presence of a proton gradient across the membrane which is generated by electron transport complexes of the respiratory chain. ATP synthase complex consist of a soluble F(1) head domain - the catalytic core - and a membrane F(1) domain - the membrane proton channel. These two domains are linked by a central stalk rotating inside the F(1) region and a stationary peripheral stalk. During catalysis, ATP synthesis in the catalytic domain of F(1) is coupled via a rotary mechanism of the central stalk subunits to proton translocation (By similarity). In vivo, can only synthesize ATP although its ATP hydrolase activity can be activated artificially in vitro (By similarity). With the central stalk subunit delta, is essential for the biogenesis of F(1) catalytic part of the ATP synthase complex namely in the formation of F1 assembly intermediate (By similarity).</text>
</comment>
<comment type="subunit">
    <text evidence="3 4 5 6">Component of the ATP synthase complex composed at least of ATP5F1A/subunit alpha, ATP5F1B/subunit beta, ATP5MC1/subunit c (homooctomer), MT-ATP6/subunit a, MT-ATP8/subunit 8, ATP5ME/subunit e, ATP5MF/subunit f, ATP5MG/subunit g, ATP5MK/subunit k, ATP5MJ/subunit j, ATP5F1C/subunit gamma, ATP5F1D/subunit delta, ATP5F1E/subunit epsilon, ATP5PF/subunit F6, ATP5PB/subunit b, ATP5PD/subunit d, ATP5PO/subunit OSCP (PubMed:17575325, PubMed:9736690). ATP synthase complex consists of a soluble F(1) head domain (subunits alpha(3) and beta(3)) - the catalytic core - and a membrane F(0) domain - the membrane proton channel (subunits c, a, 8, e, f, g, k and j). These two domains are linked by a central stalk (subunits gamma, delta, and epsilon) rotating inside the F1 region and a stationary peripheral stalk (subunits F6, b, d, and OSCP) (By similarity). Interacts with FLVCR2; this interaction occurs in the absence of heme and is disrupted upon heme binding (By similarity).</text>
</comment>
<comment type="subcellular location">
    <subcellularLocation>
        <location evidence="6">Mitochondrion inner membrane</location>
        <topology evidence="6">Peripheral membrane protein</topology>
        <orientation evidence="1">Matrix side</orientation>
    </subcellularLocation>
</comment>
<comment type="similarity">
    <text evidence="7">Belongs to the ATPase gamma chain family.</text>
</comment>
<keyword id="KW-0002">3D-structure</keyword>
<keyword id="KW-0007">Acetylation</keyword>
<keyword id="KW-0066">ATP synthesis</keyword>
<keyword id="KW-0139">CF(1)</keyword>
<keyword id="KW-0903">Direct protein sequencing</keyword>
<keyword id="KW-0375">Hydrogen ion transport</keyword>
<keyword id="KW-0406">Ion transport</keyword>
<keyword id="KW-0472">Membrane</keyword>
<keyword id="KW-0496">Mitochondrion</keyword>
<keyword id="KW-0999">Mitochondrion inner membrane</keyword>
<keyword id="KW-0597">Phosphoprotein</keyword>
<keyword id="KW-1185">Reference proteome</keyword>
<keyword id="KW-0813">Transport</keyword>
<name>ATPG_RAT</name>
<accession>P35435</accession>
<proteinExistence type="evidence at protein level"/>
<organism>
    <name type="scientific">Rattus norvegicus</name>
    <name type="common">Rat</name>
    <dbReference type="NCBI Taxonomy" id="10116"/>
    <lineage>
        <taxon>Eukaryota</taxon>
        <taxon>Metazoa</taxon>
        <taxon>Chordata</taxon>
        <taxon>Craniata</taxon>
        <taxon>Vertebrata</taxon>
        <taxon>Euteleostomi</taxon>
        <taxon>Mammalia</taxon>
        <taxon>Eutheria</taxon>
        <taxon>Euarchontoglires</taxon>
        <taxon>Glires</taxon>
        <taxon>Rodentia</taxon>
        <taxon>Myomorpha</taxon>
        <taxon>Muroidea</taxon>
        <taxon>Muridae</taxon>
        <taxon>Murinae</taxon>
        <taxon>Rattus</taxon>
    </lineage>
</organism>
<dbReference type="EMBL" id="L19927">
    <property type="protein sequence ID" value="AAA41776.1"/>
    <property type="molecule type" value="mRNA"/>
</dbReference>
<dbReference type="PIR" id="A33160">
    <property type="entry name" value="A33160"/>
</dbReference>
<dbReference type="PDB" id="1MAB">
    <property type="method" value="X-ray"/>
    <property type="resolution" value="2.80 A"/>
    <property type="chains" value="G=5-273"/>
</dbReference>
<dbReference type="PDB" id="2F43">
    <property type="method" value="X-ray"/>
    <property type="resolution" value="3.00 A"/>
    <property type="chains" value="G=1-273"/>
</dbReference>
<dbReference type="PDBsum" id="1MAB"/>
<dbReference type="PDBsum" id="2F43"/>
<dbReference type="SMR" id="P35435"/>
<dbReference type="BioGRID" id="250485">
    <property type="interactions" value="8"/>
</dbReference>
<dbReference type="CORUM" id="P35435"/>
<dbReference type="FunCoup" id="P35435">
    <property type="interactions" value="2176"/>
</dbReference>
<dbReference type="IntAct" id="P35435">
    <property type="interactions" value="7"/>
</dbReference>
<dbReference type="MINT" id="P35435"/>
<dbReference type="CarbonylDB" id="P35435"/>
<dbReference type="GlyGen" id="P35435">
    <property type="glycosylation" value="3 sites, 1 O-linked glycan (3 sites)"/>
</dbReference>
<dbReference type="iPTMnet" id="P35435"/>
<dbReference type="SwissPalm" id="P35435"/>
<dbReference type="jPOST" id="P35435"/>
<dbReference type="PaxDb" id="10116-ENSRNOP00000049879"/>
<dbReference type="UCSC" id="RGD:620011">
    <property type="organism name" value="rat"/>
</dbReference>
<dbReference type="AGR" id="RGD:620011"/>
<dbReference type="RGD" id="620011">
    <property type="gene designation" value="Atp5f1c"/>
</dbReference>
<dbReference type="eggNOG" id="KOG1531">
    <property type="taxonomic scope" value="Eukaryota"/>
</dbReference>
<dbReference type="eggNOG" id="KOG2389">
    <property type="taxonomic scope" value="Eukaryota"/>
</dbReference>
<dbReference type="InParanoid" id="P35435"/>
<dbReference type="Reactome" id="R-RNO-163210">
    <property type="pathway name" value="Formation of ATP by chemiosmotic coupling"/>
</dbReference>
<dbReference type="Reactome" id="R-RNO-8949613">
    <property type="pathway name" value="Cristae formation"/>
</dbReference>
<dbReference type="Reactome" id="R-RNO-9837999">
    <property type="pathway name" value="Mitochondrial protein degradation"/>
</dbReference>
<dbReference type="EvolutionaryTrace" id="P35435"/>
<dbReference type="PRO" id="PR:P35435"/>
<dbReference type="Proteomes" id="UP000002494">
    <property type="component" value="Unplaced"/>
</dbReference>
<dbReference type="GO" id="GO:0005743">
    <property type="term" value="C:mitochondrial inner membrane"/>
    <property type="evidence" value="ECO:0000314"/>
    <property type="project" value="RGD"/>
</dbReference>
<dbReference type="GO" id="GO:0045259">
    <property type="term" value="C:proton-transporting ATP synthase complex"/>
    <property type="evidence" value="ECO:0000314"/>
    <property type="project" value="UniProtKB"/>
</dbReference>
<dbReference type="GO" id="GO:0046933">
    <property type="term" value="F:proton-transporting ATP synthase activity, rotational mechanism"/>
    <property type="evidence" value="ECO:0007669"/>
    <property type="project" value="InterPro"/>
</dbReference>
<dbReference type="GO" id="GO:0071732">
    <property type="term" value="P:cellular response to nitric oxide"/>
    <property type="evidence" value="ECO:0000270"/>
    <property type="project" value="RGD"/>
</dbReference>
<dbReference type="GO" id="GO:0015986">
    <property type="term" value="P:proton motive force-driven ATP synthesis"/>
    <property type="evidence" value="ECO:0000318"/>
    <property type="project" value="GO_Central"/>
</dbReference>
<dbReference type="GO" id="GO:0042776">
    <property type="term" value="P:proton motive force-driven mitochondrial ATP synthesis"/>
    <property type="evidence" value="ECO:0000266"/>
    <property type="project" value="RGD"/>
</dbReference>
<dbReference type="CDD" id="cd12151">
    <property type="entry name" value="F1-ATPase_gamma"/>
    <property type="match status" value="1"/>
</dbReference>
<dbReference type="FunFam" id="1.10.287.80:FF:000007">
    <property type="entry name" value="ATP synthase gamma chain"/>
    <property type="match status" value="1"/>
</dbReference>
<dbReference type="FunFam" id="3.40.1380.10:FF:000003">
    <property type="entry name" value="ATP synthase subunit gamma"/>
    <property type="match status" value="1"/>
</dbReference>
<dbReference type="FunFam" id="1.10.287.80:FF:000013">
    <property type="entry name" value="ATP synthase subunit gamma, mitochondrial"/>
    <property type="match status" value="1"/>
</dbReference>
<dbReference type="Gene3D" id="3.40.1380.10">
    <property type="match status" value="1"/>
</dbReference>
<dbReference type="Gene3D" id="1.10.287.80">
    <property type="entry name" value="ATP synthase, gamma subunit, helix hairpin domain"/>
    <property type="match status" value="1"/>
</dbReference>
<dbReference type="InterPro" id="IPR035968">
    <property type="entry name" value="ATP_synth_F1_ATPase_gsu"/>
</dbReference>
<dbReference type="InterPro" id="IPR000131">
    <property type="entry name" value="ATP_synth_F1_gsu"/>
</dbReference>
<dbReference type="InterPro" id="IPR023632">
    <property type="entry name" value="ATP_synth_F1_gsu_CS"/>
</dbReference>
<dbReference type="NCBIfam" id="TIGR01146">
    <property type="entry name" value="ATPsyn_F1gamma"/>
    <property type="match status" value="1"/>
</dbReference>
<dbReference type="PANTHER" id="PTHR11693">
    <property type="entry name" value="ATP SYNTHASE GAMMA CHAIN"/>
    <property type="match status" value="1"/>
</dbReference>
<dbReference type="PANTHER" id="PTHR11693:SF22">
    <property type="entry name" value="ATP SYNTHASE SUBUNIT GAMMA, MITOCHONDRIAL"/>
    <property type="match status" value="1"/>
</dbReference>
<dbReference type="Pfam" id="PF00231">
    <property type="entry name" value="ATP-synt"/>
    <property type="match status" value="1"/>
</dbReference>
<dbReference type="PIRSF" id="PIRSF039089">
    <property type="entry name" value="ATP_synthase_gamma"/>
    <property type="match status" value="1"/>
</dbReference>
<dbReference type="PRINTS" id="PR00126">
    <property type="entry name" value="ATPASEGAMMA"/>
</dbReference>
<dbReference type="SUPFAM" id="SSF52943">
    <property type="entry name" value="ATP synthase (F1-ATPase), gamma subunit"/>
    <property type="match status" value="1"/>
</dbReference>
<dbReference type="PROSITE" id="PS00153">
    <property type="entry name" value="ATPASE_GAMMA"/>
    <property type="match status" value="1"/>
</dbReference>
<evidence type="ECO:0000250" key="1">
    <source>
        <dbReference type="UniProtKB" id="P05631"/>
    </source>
</evidence>
<evidence type="ECO:0000250" key="2">
    <source>
        <dbReference type="UniProtKB" id="P19483"/>
    </source>
</evidence>
<evidence type="ECO:0000250" key="3">
    <source>
        <dbReference type="UniProtKB" id="P36542"/>
    </source>
</evidence>
<evidence type="ECO:0000250" key="4">
    <source>
        <dbReference type="UniProtKB" id="Q91VR2"/>
    </source>
</evidence>
<evidence type="ECO:0000269" key="5">
    <source>
    </source>
</evidence>
<evidence type="ECO:0000269" key="6">
    <source>
    </source>
</evidence>
<evidence type="ECO:0000305" key="7"/>
<evidence type="ECO:0007829" key="8">
    <source>
        <dbReference type="PDB" id="1MAB"/>
    </source>
</evidence>
<feature type="chain" id="PRO_0000073430" description="ATP synthase F(1) complex subunit gamma, mitochondrial">
    <location>
        <begin position="1"/>
        <end position="273"/>
    </location>
</feature>
<feature type="modified residue" description="N6-acetyllysine" evidence="4">
    <location>
        <position position="14"/>
    </location>
</feature>
<feature type="modified residue" description="N6-succinyllysine" evidence="4">
    <location>
        <position position="24"/>
    </location>
</feature>
<feature type="modified residue" description="N6-acetyllysine" evidence="3">
    <location>
        <position position="30"/>
    </location>
</feature>
<feature type="modified residue" description="N6-acetyllysine; alternate" evidence="4">
    <location>
        <position position="90"/>
    </location>
</feature>
<feature type="modified residue" description="N6-succinyllysine; alternate" evidence="4">
    <location>
        <position position="90"/>
    </location>
</feature>
<feature type="modified residue" description="N6-acetyllysine" evidence="4">
    <location>
        <position position="113"/>
    </location>
</feature>
<feature type="modified residue" description="Phosphoserine" evidence="3">
    <location>
        <position position="121"/>
    </location>
</feature>
<feature type="modified residue" description="N6-acetyllysine; alternate" evidence="3">
    <location>
        <position position="129"/>
    </location>
</feature>
<feature type="modified residue" description="N6-succinyllysine; alternate" evidence="4">
    <location>
        <position position="129"/>
    </location>
</feature>
<feature type="modified residue" description="N6-acetyllysine" evidence="3">
    <location>
        <position position="172"/>
    </location>
</feature>
<feature type="modified residue" description="N6-succinyllysine" evidence="4">
    <location>
        <position position="245"/>
    </location>
</feature>
<feature type="sequence conflict" description="In Ref. 1; AAA41776." evidence="7" ref="1">
    <original>K</original>
    <variation>R</variation>
    <location>
        <position position="4"/>
    </location>
</feature>
<feature type="helix" evidence="8">
    <location>
        <begin position="6"/>
        <end position="41"/>
    </location>
</feature>
<feature type="turn" evidence="8">
    <location>
        <begin position="43"/>
        <end position="46"/>
    </location>
</feature>
<feature type="turn" evidence="8">
    <location>
        <begin position="81"/>
        <end position="87"/>
    </location>
</feature>
<feature type="helix" evidence="8">
    <location>
        <begin position="212"/>
        <end position="232"/>
    </location>
</feature>
<feature type="helix" evidence="8">
    <location>
        <begin position="234"/>
        <end position="258"/>
    </location>
</feature>
<feature type="helix" evidence="8">
    <location>
        <begin position="261"/>
        <end position="269"/>
    </location>
</feature>
<protein>
    <recommendedName>
        <fullName evidence="7">ATP synthase F(1) complex subunit gamma, mitochondrial</fullName>
    </recommendedName>
    <alternativeName>
        <fullName evidence="3">ATP synthase F1 subunit gamma</fullName>
    </alternativeName>
    <alternativeName>
        <fullName>F-ATPase gamma subunit</fullName>
    </alternativeName>
</protein>